<keyword id="KW-0004">4Fe-4S</keyword>
<keyword id="KW-0963">Cytoplasm</keyword>
<keyword id="KW-0408">Iron</keyword>
<keyword id="KW-0411">Iron-sulfur</keyword>
<keyword id="KW-0479">Metal-binding</keyword>
<keyword id="KW-0949">S-adenosyl-L-methionine</keyword>
<keyword id="KW-0808">Transferase</keyword>
<gene>
    <name evidence="1" type="primary">rimO</name>
    <name type="ordered locus">Sare_1354</name>
</gene>
<name>RIMO_SALAI</name>
<dbReference type="EC" id="2.8.4.4" evidence="1"/>
<dbReference type="EMBL" id="CP000850">
    <property type="protein sequence ID" value="ABV97255.1"/>
    <property type="molecule type" value="Genomic_DNA"/>
</dbReference>
<dbReference type="SMR" id="A8M773"/>
<dbReference type="STRING" id="391037.Sare_1354"/>
<dbReference type="KEGG" id="saq:Sare_1354"/>
<dbReference type="PATRIC" id="fig|391037.6.peg.1377"/>
<dbReference type="eggNOG" id="COG0621">
    <property type="taxonomic scope" value="Bacteria"/>
</dbReference>
<dbReference type="HOGENOM" id="CLU_018697_0_1_11"/>
<dbReference type="OrthoDB" id="9805215at2"/>
<dbReference type="GO" id="GO:0005829">
    <property type="term" value="C:cytosol"/>
    <property type="evidence" value="ECO:0007669"/>
    <property type="project" value="TreeGrafter"/>
</dbReference>
<dbReference type="GO" id="GO:0051539">
    <property type="term" value="F:4 iron, 4 sulfur cluster binding"/>
    <property type="evidence" value="ECO:0007669"/>
    <property type="project" value="UniProtKB-UniRule"/>
</dbReference>
<dbReference type="GO" id="GO:0035599">
    <property type="term" value="F:aspartic acid methylthiotransferase activity"/>
    <property type="evidence" value="ECO:0007669"/>
    <property type="project" value="TreeGrafter"/>
</dbReference>
<dbReference type="GO" id="GO:0046872">
    <property type="term" value="F:metal ion binding"/>
    <property type="evidence" value="ECO:0007669"/>
    <property type="project" value="UniProtKB-KW"/>
</dbReference>
<dbReference type="GO" id="GO:0103039">
    <property type="term" value="F:protein methylthiotransferase activity"/>
    <property type="evidence" value="ECO:0007669"/>
    <property type="project" value="UniProtKB-EC"/>
</dbReference>
<dbReference type="CDD" id="cd01335">
    <property type="entry name" value="Radical_SAM"/>
    <property type="match status" value="1"/>
</dbReference>
<dbReference type="FunFam" id="3.80.30.20:FF:000001">
    <property type="entry name" value="tRNA-2-methylthio-N(6)-dimethylallyladenosine synthase 2"/>
    <property type="match status" value="1"/>
</dbReference>
<dbReference type="Gene3D" id="3.40.50.12160">
    <property type="entry name" value="Methylthiotransferase, N-terminal domain"/>
    <property type="match status" value="1"/>
</dbReference>
<dbReference type="Gene3D" id="2.40.50.140">
    <property type="entry name" value="Nucleic acid-binding proteins"/>
    <property type="match status" value="1"/>
</dbReference>
<dbReference type="Gene3D" id="3.80.30.20">
    <property type="entry name" value="tm_1862 like domain"/>
    <property type="match status" value="1"/>
</dbReference>
<dbReference type="HAMAP" id="MF_01865">
    <property type="entry name" value="MTTase_RimO"/>
    <property type="match status" value="1"/>
</dbReference>
<dbReference type="InterPro" id="IPR006638">
    <property type="entry name" value="Elp3/MiaA/NifB-like_rSAM"/>
</dbReference>
<dbReference type="InterPro" id="IPR020612">
    <property type="entry name" value="Methylthiotransferase_CS"/>
</dbReference>
<dbReference type="InterPro" id="IPR013848">
    <property type="entry name" value="Methylthiotransferase_N"/>
</dbReference>
<dbReference type="InterPro" id="IPR038135">
    <property type="entry name" value="Methylthiotransferase_N_sf"/>
</dbReference>
<dbReference type="InterPro" id="IPR012340">
    <property type="entry name" value="NA-bd_OB-fold"/>
</dbReference>
<dbReference type="InterPro" id="IPR005840">
    <property type="entry name" value="Ribosomal_uS12_MeSTrfase_RimO"/>
</dbReference>
<dbReference type="InterPro" id="IPR007197">
    <property type="entry name" value="rSAM"/>
</dbReference>
<dbReference type="InterPro" id="IPR023404">
    <property type="entry name" value="rSAM_horseshoe"/>
</dbReference>
<dbReference type="InterPro" id="IPR002792">
    <property type="entry name" value="TRAM_dom"/>
</dbReference>
<dbReference type="NCBIfam" id="TIGR01125">
    <property type="entry name" value="30S ribosomal protein S12 methylthiotransferase RimO"/>
    <property type="match status" value="1"/>
</dbReference>
<dbReference type="PANTHER" id="PTHR43837">
    <property type="entry name" value="RIBOSOMAL PROTEIN S12 METHYLTHIOTRANSFERASE RIMO"/>
    <property type="match status" value="1"/>
</dbReference>
<dbReference type="PANTHER" id="PTHR43837:SF1">
    <property type="entry name" value="RIBOSOMAL PROTEIN US12 METHYLTHIOTRANSFERASE RIMO"/>
    <property type="match status" value="1"/>
</dbReference>
<dbReference type="Pfam" id="PF04055">
    <property type="entry name" value="Radical_SAM"/>
    <property type="match status" value="1"/>
</dbReference>
<dbReference type="Pfam" id="PF18693">
    <property type="entry name" value="TRAM_2"/>
    <property type="match status" value="1"/>
</dbReference>
<dbReference type="Pfam" id="PF00919">
    <property type="entry name" value="UPF0004"/>
    <property type="match status" value="1"/>
</dbReference>
<dbReference type="SFLD" id="SFLDG01082">
    <property type="entry name" value="B12-binding_domain_containing"/>
    <property type="match status" value="1"/>
</dbReference>
<dbReference type="SFLD" id="SFLDS00029">
    <property type="entry name" value="Radical_SAM"/>
    <property type="match status" value="1"/>
</dbReference>
<dbReference type="SFLD" id="SFLDF00274">
    <property type="entry name" value="ribosomal_protein_S12_methylth"/>
    <property type="match status" value="1"/>
</dbReference>
<dbReference type="SMART" id="SM00729">
    <property type="entry name" value="Elp3"/>
    <property type="match status" value="1"/>
</dbReference>
<dbReference type="SUPFAM" id="SSF102114">
    <property type="entry name" value="Radical SAM enzymes"/>
    <property type="match status" value="1"/>
</dbReference>
<dbReference type="PROSITE" id="PS51449">
    <property type="entry name" value="MTTASE_N"/>
    <property type="match status" value="1"/>
</dbReference>
<dbReference type="PROSITE" id="PS01278">
    <property type="entry name" value="MTTASE_RADICAL"/>
    <property type="match status" value="1"/>
</dbReference>
<dbReference type="PROSITE" id="PS51918">
    <property type="entry name" value="RADICAL_SAM"/>
    <property type="match status" value="1"/>
</dbReference>
<reference key="1">
    <citation type="submission" date="2007-10" db="EMBL/GenBank/DDBJ databases">
        <title>Complete sequence of Salinispora arenicola CNS-205.</title>
        <authorList>
            <consortium name="US DOE Joint Genome Institute"/>
            <person name="Copeland A."/>
            <person name="Lucas S."/>
            <person name="Lapidus A."/>
            <person name="Barry K."/>
            <person name="Glavina del Rio T."/>
            <person name="Dalin E."/>
            <person name="Tice H."/>
            <person name="Pitluck S."/>
            <person name="Foster B."/>
            <person name="Schmutz J."/>
            <person name="Larimer F."/>
            <person name="Land M."/>
            <person name="Hauser L."/>
            <person name="Kyrpides N."/>
            <person name="Ivanova N."/>
            <person name="Jensen P.R."/>
            <person name="Moore B.S."/>
            <person name="Penn K."/>
            <person name="Jenkins C."/>
            <person name="Udwary D."/>
            <person name="Xiang L."/>
            <person name="Gontang E."/>
            <person name="Richardson P."/>
        </authorList>
    </citation>
    <scope>NUCLEOTIDE SEQUENCE [LARGE SCALE GENOMIC DNA]</scope>
    <source>
        <strain>CNS-205</strain>
    </source>
</reference>
<sequence length="507" mass="53383">MVSATSASPADGRRVALLTLGCARNEVDSEELAARLHADGWQVTTDGEGAEVVVVNTCGFVEKAKQDSIQTLLAAAETGAKVVAAGCMAERYGRELADSLPEAQAVLSFDDYPDISDRLGAVLAGTAIDAHTPRDRRELLPLTPVRRREAAVSLPGHGTRAAAAGPGGRSAPVEVDEHTPAHLRPVLRRRLDTGPVASLKLASGCDRRCAFCAIPAFRGAFVSRPPEELLAEAEWLARTGVRELVLVSENSSSYGKDLGDPRALEKLLPQLAAVDGIVRVRASYLQPAETRPGLVEAIATTPGVAAYFDLSFQHSSEPVLRRMRRFGSTERFLDLLASVRALAPEAGARSNFIVGFPGETRADVAELVRFLNEARLDAIGVFDYSDEDGTEAAGLSGKVSATTVKRRYDRLGALADELCAQRAEQRLGSTVQVLVDSVDDGVVEGRAAHQAPEVDGSTTLVAPSGGGVDLAALRPGDLVRCTVTATEGVDLVAVPDGMISAAPGVAR</sequence>
<comment type="function">
    <text evidence="1">Catalyzes the methylthiolation of an aspartic acid residue of ribosomal protein uS12.</text>
</comment>
<comment type="catalytic activity">
    <reaction evidence="1">
        <text>L-aspartate(89)-[ribosomal protein uS12]-hydrogen + (sulfur carrier)-SH + AH2 + 2 S-adenosyl-L-methionine = 3-methylsulfanyl-L-aspartate(89)-[ribosomal protein uS12]-hydrogen + (sulfur carrier)-H + 5'-deoxyadenosine + L-methionine + A + S-adenosyl-L-homocysteine + 2 H(+)</text>
        <dbReference type="Rhea" id="RHEA:37087"/>
        <dbReference type="Rhea" id="RHEA-COMP:10460"/>
        <dbReference type="Rhea" id="RHEA-COMP:10461"/>
        <dbReference type="Rhea" id="RHEA-COMP:14737"/>
        <dbReference type="Rhea" id="RHEA-COMP:14739"/>
        <dbReference type="ChEBI" id="CHEBI:13193"/>
        <dbReference type="ChEBI" id="CHEBI:15378"/>
        <dbReference type="ChEBI" id="CHEBI:17319"/>
        <dbReference type="ChEBI" id="CHEBI:17499"/>
        <dbReference type="ChEBI" id="CHEBI:29917"/>
        <dbReference type="ChEBI" id="CHEBI:29961"/>
        <dbReference type="ChEBI" id="CHEBI:57844"/>
        <dbReference type="ChEBI" id="CHEBI:57856"/>
        <dbReference type="ChEBI" id="CHEBI:59789"/>
        <dbReference type="ChEBI" id="CHEBI:64428"/>
        <dbReference type="ChEBI" id="CHEBI:73599"/>
        <dbReference type="EC" id="2.8.4.4"/>
    </reaction>
</comment>
<comment type="cofactor">
    <cofactor evidence="1">
        <name>[4Fe-4S] cluster</name>
        <dbReference type="ChEBI" id="CHEBI:49883"/>
    </cofactor>
    <text evidence="1">Binds 2 [4Fe-4S] clusters. One cluster is coordinated with 3 cysteines and an exchangeable S-adenosyl-L-methionine.</text>
</comment>
<comment type="subcellular location">
    <subcellularLocation>
        <location evidence="1">Cytoplasm</location>
    </subcellularLocation>
</comment>
<comment type="similarity">
    <text evidence="1">Belongs to the methylthiotransferase family. RimO subfamily.</text>
</comment>
<evidence type="ECO:0000255" key="1">
    <source>
        <dbReference type="HAMAP-Rule" id="MF_01865"/>
    </source>
</evidence>
<evidence type="ECO:0000255" key="2">
    <source>
        <dbReference type="PROSITE-ProRule" id="PRU01266"/>
    </source>
</evidence>
<evidence type="ECO:0000256" key="3">
    <source>
        <dbReference type="SAM" id="MobiDB-lite"/>
    </source>
</evidence>
<accession>A8M773</accession>
<proteinExistence type="inferred from homology"/>
<protein>
    <recommendedName>
        <fullName evidence="1">Ribosomal protein uS12 methylthiotransferase RimO</fullName>
        <shortName evidence="1">uS12 MTTase</shortName>
        <shortName evidence="1">uS12 methylthiotransferase</shortName>
        <ecNumber evidence="1">2.8.4.4</ecNumber>
    </recommendedName>
    <alternativeName>
        <fullName evidence="1">Ribosomal protein uS12 (aspartate-C(3))-methylthiotransferase</fullName>
    </alternativeName>
    <alternativeName>
        <fullName evidence="1">Ribosome maturation factor RimO</fullName>
    </alternativeName>
</protein>
<organism>
    <name type="scientific">Salinispora arenicola (strain CNS-205)</name>
    <dbReference type="NCBI Taxonomy" id="391037"/>
    <lineage>
        <taxon>Bacteria</taxon>
        <taxon>Bacillati</taxon>
        <taxon>Actinomycetota</taxon>
        <taxon>Actinomycetes</taxon>
        <taxon>Micromonosporales</taxon>
        <taxon>Micromonosporaceae</taxon>
        <taxon>Salinispora</taxon>
    </lineage>
</organism>
<feature type="chain" id="PRO_0000374983" description="Ribosomal protein uS12 methylthiotransferase RimO">
    <location>
        <begin position="1"/>
        <end position="507"/>
    </location>
</feature>
<feature type="domain" description="MTTase N-terminal" evidence="1">
    <location>
        <begin position="13"/>
        <end position="124"/>
    </location>
</feature>
<feature type="domain" description="Radical SAM core" evidence="2">
    <location>
        <begin position="191"/>
        <end position="422"/>
    </location>
</feature>
<feature type="domain" description="TRAM" evidence="1">
    <location>
        <begin position="424"/>
        <end position="497"/>
    </location>
</feature>
<feature type="region of interest" description="Disordered" evidence="3">
    <location>
        <begin position="150"/>
        <end position="175"/>
    </location>
</feature>
<feature type="compositionally biased region" description="Low complexity" evidence="3">
    <location>
        <begin position="155"/>
        <end position="172"/>
    </location>
</feature>
<feature type="binding site" evidence="1">
    <location>
        <position position="22"/>
    </location>
    <ligand>
        <name>[4Fe-4S] cluster</name>
        <dbReference type="ChEBI" id="CHEBI:49883"/>
        <label>1</label>
    </ligand>
</feature>
<feature type="binding site" evidence="1">
    <location>
        <position position="58"/>
    </location>
    <ligand>
        <name>[4Fe-4S] cluster</name>
        <dbReference type="ChEBI" id="CHEBI:49883"/>
        <label>1</label>
    </ligand>
</feature>
<feature type="binding site" evidence="1">
    <location>
        <position position="87"/>
    </location>
    <ligand>
        <name>[4Fe-4S] cluster</name>
        <dbReference type="ChEBI" id="CHEBI:49883"/>
        <label>1</label>
    </ligand>
</feature>
<feature type="binding site" evidence="1">
    <location>
        <position position="205"/>
    </location>
    <ligand>
        <name>[4Fe-4S] cluster</name>
        <dbReference type="ChEBI" id="CHEBI:49883"/>
        <label>2</label>
        <note>4Fe-4S-S-AdoMet</note>
    </ligand>
</feature>
<feature type="binding site" evidence="1">
    <location>
        <position position="209"/>
    </location>
    <ligand>
        <name>[4Fe-4S] cluster</name>
        <dbReference type="ChEBI" id="CHEBI:49883"/>
        <label>2</label>
        <note>4Fe-4S-S-AdoMet</note>
    </ligand>
</feature>
<feature type="binding site" evidence="1">
    <location>
        <position position="212"/>
    </location>
    <ligand>
        <name>[4Fe-4S] cluster</name>
        <dbReference type="ChEBI" id="CHEBI:49883"/>
        <label>2</label>
        <note>4Fe-4S-S-AdoMet</note>
    </ligand>
</feature>